<proteinExistence type="evidence at protein level"/>
<dbReference type="EMBL" id="AL049711">
    <property type="protein sequence ID" value="CAB41316.1"/>
    <property type="status" value="ALT_SEQ"/>
    <property type="molecule type" value="Genomic_DNA"/>
</dbReference>
<dbReference type="EMBL" id="CP002686">
    <property type="protein sequence ID" value="AEE78869.1"/>
    <property type="molecule type" value="Genomic_DNA"/>
</dbReference>
<dbReference type="EMBL" id="AK117629">
    <property type="protein sequence ID" value="BAC42285.1"/>
    <property type="molecule type" value="mRNA"/>
</dbReference>
<dbReference type="EMBL" id="BT005422">
    <property type="protein sequence ID" value="AAO63842.1"/>
    <property type="molecule type" value="mRNA"/>
</dbReference>
<dbReference type="PIR" id="T49075">
    <property type="entry name" value="T49075"/>
</dbReference>
<dbReference type="RefSeq" id="NP_850680.1">
    <molecule id="Q8GTS1-1"/>
    <property type="nucleotide sequence ID" value="NM_180349.1"/>
</dbReference>
<dbReference type="SMR" id="Q8GTS1"/>
<dbReference type="FunCoup" id="Q8GTS1">
    <property type="interactions" value="3"/>
</dbReference>
<dbReference type="IntAct" id="Q8GTS1">
    <property type="interactions" value="8"/>
</dbReference>
<dbReference type="STRING" id="3702.Q8GTS1"/>
<dbReference type="PaxDb" id="3702-AT3G51960.2"/>
<dbReference type="ProteomicsDB" id="240443">
    <molecule id="Q8GTS1-1"/>
</dbReference>
<dbReference type="EnsemblPlants" id="AT3G51960.1">
    <molecule id="Q8GTS1-1"/>
    <property type="protein sequence ID" value="AT3G51960.1"/>
    <property type="gene ID" value="AT3G51960"/>
</dbReference>
<dbReference type="GeneID" id="824359"/>
<dbReference type="Gramene" id="AT3G51960.1">
    <molecule id="Q8GTS1-1"/>
    <property type="protein sequence ID" value="AT3G51960.1"/>
    <property type="gene ID" value="AT3G51960"/>
</dbReference>
<dbReference type="KEGG" id="ath:AT3G51960"/>
<dbReference type="Araport" id="AT3G51960"/>
<dbReference type="TAIR" id="AT3G51960">
    <property type="gene designation" value="BZIP24"/>
</dbReference>
<dbReference type="eggNOG" id="ENOG502R3UK">
    <property type="taxonomic scope" value="Eukaryota"/>
</dbReference>
<dbReference type="InParanoid" id="Q8GTS1"/>
<dbReference type="OrthoDB" id="1918304at2759"/>
<dbReference type="PhylomeDB" id="Q8GTS1"/>
<dbReference type="PRO" id="PR:Q8GTS1"/>
<dbReference type="Proteomes" id="UP000006548">
    <property type="component" value="Chromosome 3"/>
</dbReference>
<dbReference type="ExpressionAtlas" id="Q8GTS1">
    <property type="expression patterns" value="baseline and differential"/>
</dbReference>
<dbReference type="GO" id="GO:0005737">
    <property type="term" value="C:cytoplasm"/>
    <property type="evidence" value="ECO:0000314"/>
    <property type="project" value="UniProtKB"/>
</dbReference>
<dbReference type="GO" id="GO:0005634">
    <property type="term" value="C:nucleus"/>
    <property type="evidence" value="ECO:0000314"/>
    <property type="project" value="UniProtKB"/>
</dbReference>
<dbReference type="GO" id="GO:0003677">
    <property type="term" value="F:DNA binding"/>
    <property type="evidence" value="ECO:0007669"/>
    <property type="project" value="UniProtKB-KW"/>
</dbReference>
<dbReference type="GO" id="GO:0003700">
    <property type="term" value="F:DNA-binding transcription factor activity"/>
    <property type="evidence" value="ECO:0007669"/>
    <property type="project" value="InterPro"/>
</dbReference>
<dbReference type="GO" id="GO:0042803">
    <property type="term" value="F:protein homodimerization activity"/>
    <property type="evidence" value="ECO:0000353"/>
    <property type="project" value="UniProtKB"/>
</dbReference>
<dbReference type="GO" id="GO:0006351">
    <property type="term" value="P:DNA-templated transcription"/>
    <property type="evidence" value="ECO:0007669"/>
    <property type="project" value="InterPro"/>
</dbReference>
<dbReference type="GO" id="GO:1901001">
    <property type="term" value="P:negative regulation of response to salt stress"/>
    <property type="evidence" value="ECO:0000315"/>
    <property type="project" value="UniProtKB"/>
</dbReference>
<dbReference type="CDD" id="cd14686">
    <property type="entry name" value="bZIP"/>
    <property type="match status" value="1"/>
</dbReference>
<dbReference type="Gene3D" id="1.20.5.170">
    <property type="match status" value="1"/>
</dbReference>
<dbReference type="InterPro" id="IPR004827">
    <property type="entry name" value="bZIP"/>
</dbReference>
<dbReference type="InterPro" id="IPR046347">
    <property type="entry name" value="bZIP_sf"/>
</dbReference>
<dbReference type="InterPro" id="IPR031106">
    <property type="entry name" value="C/EBP"/>
</dbReference>
<dbReference type="PANTHER" id="PTHR23334:SF20">
    <property type="entry name" value="BASIC LEUCINE ZIPPER 24"/>
    <property type="match status" value="1"/>
</dbReference>
<dbReference type="PANTHER" id="PTHR23334">
    <property type="entry name" value="CCAAT/ENHANCER BINDING PROTEIN"/>
    <property type="match status" value="1"/>
</dbReference>
<dbReference type="Pfam" id="PF07716">
    <property type="entry name" value="bZIP_2"/>
    <property type="match status" value="1"/>
</dbReference>
<dbReference type="SMART" id="SM00338">
    <property type="entry name" value="BRLZ"/>
    <property type="match status" value="1"/>
</dbReference>
<dbReference type="SUPFAM" id="SSF57959">
    <property type="entry name" value="Leucine zipper domain"/>
    <property type="match status" value="1"/>
</dbReference>
<dbReference type="PROSITE" id="PS50217">
    <property type="entry name" value="BZIP"/>
    <property type="match status" value="1"/>
</dbReference>
<comment type="function">
    <text evidence="3 4">Transcription factor involved in the regulation of salt stress response. Functions as a negative transcriptional regulator of salt stress acclimation response by regulating cation homeostasis (PubMed:18703123, PubMed:19248824). Negatively regulates the expression of genes contributing to ion and osmotic homeostasis during salt stress, such as the Na(+) transporter HKT1, the Na(+)/H(+) antiporter SOS1, the aquaporin PIP2-1 and the glutamine synthetase GLN1-3. In addition, targets genes with functions in plant growth and development, such as argonaute 4 (AGO4) and cyclophilin 19 (CYP19) (PubMed:19248824).</text>
</comment>
<comment type="subunit">
    <text evidence="4">Homodimer.</text>
</comment>
<comment type="interaction">
    <interactant intactId="EBI-2292496">
        <id>Q8GTS1</id>
    </interactant>
    <interactant intactId="EBI-4427398">
        <id>Q8LBK6</id>
        <label>GRXS15</label>
    </interactant>
    <organismsDiffer>false</organismsDiffer>
    <experiments>2</experiments>
</comment>
<comment type="subcellular location">
    <subcellularLocation>
        <location evidence="1 3 4">Nucleus</location>
    </subcellularLocation>
    <subcellularLocation>
        <location evidence="3 4">Cytoplasm</location>
    </subcellularLocation>
    <text evidence="4">Targeted to the nucleus in salt stress conditions.</text>
</comment>
<comment type="alternative products">
    <event type="alternative splicing"/>
    <isoform>
        <id>Q8GTS1-1</id>
        <name>1</name>
        <sequence type="displayed"/>
    </isoform>
    <text evidence="6">A number of isoforms are produced. According to EST sequences.</text>
</comment>
<comment type="tissue specificity">
    <text evidence="4">Expressed in young leaves and cauline leaves.</text>
</comment>
<comment type="induction">
    <text evidence="3 4">Induced by salt stress (PubMed:18703123, PubMed:19248824). Induced by osmotic stress (PubMed:19248824).</text>
</comment>
<comment type="miscellaneous">
    <text evidence="3 4">Plants silencing BZIP24 show enhanced tolerance to salt stress (PubMed:18703123, PubMed:19248824). Enhanced salt stress tolerance in silencing plants is characterized by enhanced root and leaves development and reduced sodium accumulation in plants (PubMed:19248824).</text>
</comment>
<comment type="sequence caution" evidence="6">
    <conflict type="erroneous gene model prediction">
        <sequence resource="EMBL-CDS" id="CAB41316"/>
    </conflict>
</comment>
<protein>
    <recommendedName>
        <fullName evidence="5">Basic leucine zipper 24</fullName>
        <shortName evidence="5">AtbZIP24</shortName>
        <shortName evidence="6">bZIP protein 24</shortName>
    </recommendedName>
</protein>
<organism>
    <name type="scientific">Arabidopsis thaliana</name>
    <name type="common">Mouse-ear cress</name>
    <dbReference type="NCBI Taxonomy" id="3702"/>
    <lineage>
        <taxon>Eukaryota</taxon>
        <taxon>Viridiplantae</taxon>
        <taxon>Streptophyta</taxon>
        <taxon>Embryophyta</taxon>
        <taxon>Tracheophyta</taxon>
        <taxon>Spermatophyta</taxon>
        <taxon>Magnoliopsida</taxon>
        <taxon>eudicotyledons</taxon>
        <taxon>Gunneridae</taxon>
        <taxon>Pentapetalae</taxon>
        <taxon>rosids</taxon>
        <taxon>malvids</taxon>
        <taxon>Brassicales</taxon>
        <taxon>Brassicaceae</taxon>
        <taxon>Camelineae</taxon>
        <taxon>Arabidopsis</taxon>
    </lineage>
</organism>
<reference key="1">
    <citation type="journal article" date="2000" name="Nature">
        <title>Sequence and analysis of chromosome 3 of the plant Arabidopsis thaliana.</title>
        <authorList>
            <person name="Salanoubat M."/>
            <person name="Lemcke K."/>
            <person name="Rieger M."/>
            <person name="Ansorge W."/>
            <person name="Unseld M."/>
            <person name="Fartmann B."/>
            <person name="Valle G."/>
            <person name="Bloecker H."/>
            <person name="Perez-Alonso M."/>
            <person name="Obermaier B."/>
            <person name="Delseny M."/>
            <person name="Boutry M."/>
            <person name="Grivell L.A."/>
            <person name="Mache R."/>
            <person name="Puigdomenech P."/>
            <person name="De Simone V."/>
            <person name="Choisne N."/>
            <person name="Artiguenave F."/>
            <person name="Robert C."/>
            <person name="Brottier P."/>
            <person name="Wincker P."/>
            <person name="Cattolico L."/>
            <person name="Weissenbach J."/>
            <person name="Saurin W."/>
            <person name="Quetier F."/>
            <person name="Schaefer M."/>
            <person name="Mueller-Auer S."/>
            <person name="Gabel C."/>
            <person name="Fuchs M."/>
            <person name="Benes V."/>
            <person name="Wurmbach E."/>
            <person name="Drzonek H."/>
            <person name="Erfle H."/>
            <person name="Jordan N."/>
            <person name="Bangert S."/>
            <person name="Wiedelmann R."/>
            <person name="Kranz H."/>
            <person name="Voss H."/>
            <person name="Holland R."/>
            <person name="Brandt P."/>
            <person name="Nyakatura G."/>
            <person name="Vezzi A."/>
            <person name="D'Angelo M."/>
            <person name="Pallavicini A."/>
            <person name="Toppo S."/>
            <person name="Simionati B."/>
            <person name="Conrad A."/>
            <person name="Hornischer K."/>
            <person name="Kauer G."/>
            <person name="Loehnert T.-H."/>
            <person name="Nordsiek G."/>
            <person name="Reichelt J."/>
            <person name="Scharfe M."/>
            <person name="Schoen O."/>
            <person name="Bargues M."/>
            <person name="Terol J."/>
            <person name="Climent J."/>
            <person name="Navarro P."/>
            <person name="Collado C."/>
            <person name="Perez-Perez A."/>
            <person name="Ottenwaelder B."/>
            <person name="Duchemin D."/>
            <person name="Cooke R."/>
            <person name="Laudie M."/>
            <person name="Berger-Llauro C."/>
            <person name="Purnelle B."/>
            <person name="Masuy D."/>
            <person name="de Haan M."/>
            <person name="Maarse A.C."/>
            <person name="Alcaraz J.-P."/>
            <person name="Cottet A."/>
            <person name="Casacuberta E."/>
            <person name="Monfort A."/>
            <person name="Argiriou A."/>
            <person name="Flores M."/>
            <person name="Liguori R."/>
            <person name="Vitale D."/>
            <person name="Mannhaupt G."/>
            <person name="Haase D."/>
            <person name="Schoof H."/>
            <person name="Rudd S."/>
            <person name="Zaccaria P."/>
            <person name="Mewes H.-W."/>
            <person name="Mayer K.F.X."/>
            <person name="Kaul S."/>
            <person name="Town C.D."/>
            <person name="Koo H.L."/>
            <person name="Tallon L.J."/>
            <person name="Jenkins J."/>
            <person name="Rooney T."/>
            <person name="Rizzo M."/>
            <person name="Walts A."/>
            <person name="Utterback T."/>
            <person name="Fujii C.Y."/>
            <person name="Shea T.P."/>
            <person name="Creasy T.H."/>
            <person name="Haas B."/>
            <person name="Maiti R."/>
            <person name="Wu D."/>
            <person name="Peterson J."/>
            <person name="Van Aken S."/>
            <person name="Pai G."/>
            <person name="Militscher J."/>
            <person name="Sellers P."/>
            <person name="Gill J.E."/>
            <person name="Feldblyum T.V."/>
            <person name="Preuss D."/>
            <person name="Lin X."/>
            <person name="Nierman W.C."/>
            <person name="Salzberg S.L."/>
            <person name="White O."/>
            <person name="Venter J.C."/>
            <person name="Fraser C.M."/>
            <person name="Kaneko T."/>
            <person name="Nakamura Y."/>
            <person name="Sato S."/>
            <person name="Kato T."/>
            <person name="Asamizu E."/>
            <person name="Sasamoto S."/>
            <person name="Kimura T."/>
            <person name="Idesawa K."/>
            <person name="Kawashima K."/>
            <person name="Kishida Y."/>
            <person name="Kiyokawa C."/>
            <person name="Kohara M."/>
            <person name="Matsumoto M."/>
            <person name="Matsuno A."/>
            <person name="Muraki A."/>
            <person name="Nakayama S."/>
            <person name="Nakazaki N."/>
            <person name="Shinpo S."/>
            <person name="Takeuchi C."/>
            <person name="Wada T."/>
            <person name="Watanabe A."/>
            <person name="Yamada M."/>
            <person name="Yasuda M."/>
            <person name="Tabata S."/>
        </authorList>
    </citation>
    <scope>NUCLEOTIDE SEQUENCE [LARGE SCALE GENOMIC DNA]</scope>
    <source>
        <strain>cv. Columbia</strain>
    </source>
</reference>
<reference key="2">
    <citation type="journal article" date="2017" name="Plant J.">
        <title>Araport11: a complete reannotation of the Arabidopsis thaliana reference genome.</title>
        <authorList>
            <person name="Cheng C.Y."/>
            <person name="Krishnakumar V."/>
            <person name="Chan A.P."/>
            <person name="Thibaud-Nissen F."/>
            <person name="Schobel S."/>
            <person name="Town C.D."/>
        </authorList>
    </citation>
    <scope>GENOME REANNOTATION</scope>
    <source>
        <strain>cv. Columbia</strain>
    </source>
</reference>
<reference key="3">
    <citation type="journal article" date="2002" name="Science">
        <title>Functional annotation of a full-length Arabidopsis cDNA collection.</title>
        <authorList>
            <person name="Seki M."/>
            <person name="Narusaka M."/>
            <person name="Kamiya A."/>
            <person name="Ishida J."/>
            <person name="Satou M."/>
            <person name="Sakurai T."/>
            <person name="Nakajima M."/>
            <person name="Enju A."/>
            <person name="Akiyama K."/>
            <person name="Oono Y."/>
            <person name="Muramatsu M."/>
            <person name="Hayashizaki Y."/>
            <person name="Kawai J."/>
            <person name="Carninci P."/>
            <person name="Itoh M."/>
            <person name="Ishii Y."/>
            <person name="Arakawa T."/>
            <person name="Shibata K."/>
            <person name="Shinagawa A."/>
            <person name="Shinozaki K."/>
        </authorList>
    </citation>
    <scope>NUCLEOTIDE SEQUENCE [LARGE SCALE MRNA]</scope>
    <source>
        <strain>cv. Columbia</strain>
    </source>
</reference>
<reference key="4">
    <citation type="journal article" date="2003" name="Science">
        <title>Empirical analysis of transcriptional activity in the Arabidopsis genome.</title>
        <authorList>
            <person name="Yamada K."/>
            <person name="Lim J."/>
            <person name="Dale J.M."/>
            <person name="Chen H."/>
            <person name="Shinn P."/>
            <person name="Palm C.J."/>
            <person name="Southwick A.M."/>
            <person name="Wu H.C."/>
            <person name="Kim C.J."/>
            <person name="Nguyen M."/>
            <person name="Pham P.K."/>
            <person name="Cheuk R.F."/>
            <person name="Karlin-Newmann G."/>
            <person name="Liu S.X."/>
            <person name="Lam B."/>
            <person name="Sakano H."/>
            <person name="Wu T."/>
            <person name="Yu G."/>
            <person name="Miranda M."/>
            <person name="Quach H.L."/>
            <person name="Tripp M."/>
            <person name="Chang C.H."/>
            <person name="Lee J.M."/>
            <person name="Toriumi M.J."/>
            <person name="Chan M.M."/>
            <person name="Tang C.C."/>
            <person name="Onodera C.S."/>
            <person name="Deng J.M."/>
            <person name="Akiyama K."/>
            <person name="Ansari Y."/>
            <person name="Arakawa T."/>
            <person name="Banh J."/>
            <person name="Banno F."/>
            <person name="Bowser L."/>
            <person name="Brooks S.Y."/>
            <person name="Carninci P."/>
            <person name="Chao Q."/>
            <person name="Choy N."/>
            <person name="Enju A."/>
            <person name="Goldsmith A.D."/>
            <person name="Gurjal M."/>
            <person name="Hansen N.F."/>
            <person name="Hayashizaki Y."/>
            <person name="Johnson-Hopson C."/>
            <person name="Hsuan V.W."/>
            <person name="Iida K."/>
            <person name="Karnes M."/>
            <person name="Khan S."/>
            <person name="Koesema E."/>
            <person name="Ishida J."/>
            <person name="Jiang P.X."/>
            <person name="Jones T."/>
            <person name="Kawai J."/>
            <person name="Kamiya A."/>
            <person name="Meyers C."/>
            <person name="Nakajima M."/>
            <person name="Narusaka M."/>
            <person name="Seki M."/>
            <person name="Sakurai T."/>
            <person name="Satou M."/>
            <person name="Tamse R."/>
            <person name="Vaysberg M."/>
            <person name="Wallender E.K."/>
            <person name="Wong C."/>
            <person name="Yamamura Y."/>
            <person name="Yuan S."/>
            <person name="Shinozaki K."/>
            <person name="Davis R.W."/>
            <person name="Theologis A."/>
            <person name="Ecker J.R."/>
        </authorList>
    </citation>
    <scope>NUCLEOTIDE SEQUENCE [LARGE SCALE MRNA]</scope>
    <source>
        <strain>cv. Columbia</strain>
    </source>
</reference>
<reference key="5">
    <citation type="journal article" date="2002" name="Trends Plant Sci.">
        <title>bZIP transcription factors in Arabidopsis.</title>
        <authorList>
            <person name="Jakoby M."/>
            <person name="Weisshaar B."/>
            <person name="Droege-Laser W."/>
            <person name="Vicente-Carbajosa J."/>
            <person name="Tiedemann J."/>
            <person name="Kroj T."/>
            <person name="Parcy F."/>
        </authorList>
    </citation>
    <scope>GENE FAMILY</scope>
    <scope>NOMENCLATURE</scope>
</reference>
<reference key="6">
    <citation type="journal article" date="2008" name="Gene">
        <title>Differential transcript regulation in Arabidopsis thaliana and the halotolerant Lobularia maritima indicates genes with potential function in plant salt adaptation.</title>
        <authorList>
            <person name="Popova O.V."/>
            <person name="Yang O."/>
            <person name="Dietz K.J."/>
            <person name="Golldack D."/>
        </authorList>
    </citation>
    <scope>FUNCTION</scope>
    <scope>SUBCELLULAR LOCATION</scope>
    <scope>INDUCTION BY SALT STRESS</scope>
</reference>
<reference key="7">
    <citation type="journal article" date="2009" name="Gene">
        <title>The Arabidopsis basic leucine zipper transcription factor AtbZIP24 regulates complex transcriptional networks involved in abiotic stress resistance.</title>
        <authorList>
            <person name="Yang O."/>
            <person name="Popova O.V."/>
            <person name="Suethoff U."/>
            <person name="Lueking I."/>
            <person name="Dietz K.J."/>
            <person name="Golldack D."/>
        </authorList>
    </citation>
    <scope>FUNCTION</scope>
    <scope>SUBUNIT</scope>
    <scope>SUBCELLULAR LOCATION</scope>
    <scope>TISSUE SPECIFICITY</scope>
    <scope>INDUCTION</scope>
</reference>
<feature type="chain" id="PRO_0000435722" description="Basic leucine zipper 24">
    <location>
        <begin position="1"/>
        <end position="227"/>
    </location>
</feature>
<feature type="domain" description="bZIP" evidence="1">
    <location>
        <begin position="94"/>
        <end position="160"/>
    </location>
</feature>
<feature type="region of interest" description="Disordered" evidence="2">
    <location>
        <begin position="44"/>
        <end position="68"/>
    </location>
</feature>
<feature type="region of interest" description="Basic motif" evidence="1">
    <location>
        <begin position="98"/>
        <end position="118"/>
    </location>
</feature>
<feature type="region of interest" description="Leucine-zipper" evidence="1">
    <location>
        <begin position="122"/>
        <end position="129"/>
    </location>
</feature>
<name>BZP24_ARATH</name>
<evidence type="ECO:0000255" key="1">
    <source>
        <dbReference type="PROSITE-ProRule" id="PRU00978"/>
    </source>
</evidence>
<evidence type="ECO:0000256" key="2">
    <source>
        <dbReference type="SAM" id="MobiDB-lite"/>
    </source>
</evidence>
<evidence type="ECO:0000269" key="3">
    <source>
    </source>
</evidence>
<evidence type="ECO:0000269" key="4">
    <source>
    </source>
</evidence>
<evidence type="ECO:0000303" key="5">
    <source>
    </source>
</evidence>
<evidence type="ECO:0000305" key="6"/>
<evidence type="ECO:0000312" key="7">
    <source>
        <dbReference type="Araport" id="AT3G51960"/>
    </source>
</evidence>
<evidence type="ECO:0000312" key="8">
    <source>
        <dbReference type="EMBL" id="CAB41316.1"/>
    </source>
</evidence>
<keyword id="KW-0025">Alternative splicing</keyword>
<keyword id="KW-0963">Cytoplasm</keyword>
<keyword id="KW-0238">DNA-binding</keyword>
<keyword id="KW-0539">Nucleus</keyword>
<keyword id="KW-1185">Reference proteome</keyword>
<keyword id="KW-0678">Repressor</keyword>
<keyword id="KW-0346">Stress response</keyword>
<keyword id="KW-0804">Transcription</keyword>
<keyword id="KW-0805">Transcription regulation</keyword>
<gene>
    <name evidence="5" type="primary">BZIP24</name>
    <name evidence="7" type="ordered locus">At3g51960</name>
    <name evidence="8" type="ORF">F4F15.70</name>
</gene>
<sequence length="227" mass="26091">MFCCCKDCRGNQRVSNFDSLTGVFFGDLEFGPQNQRYIKMNEEEDKDQDRVTRGCSHTHSCNPPGPEDASHSHTCFHAHTHLIISDQQENDHSDSSNKKRLCGNREAVRKYREKKKARTAYLEDEVMRLQSLNEQFLRKLQSQEMVETELIRLRALLVEMQGKIEVELCSFSFQKQCNGSGFVFKEDGCNLATSNMMCEAARVECEEGQTLHDPIQSFVPQPPPFSR</sequence>
<accession>Q8GTS1</accession>
<accession>Q9SV08</accession>